<protein>
    <recommendedName>
        <fullName evidence="2">Merozoite surface protein 2</fullName>
    </recommendedName>
    <alternativeName>
        <fullName evidence="8">Membrane protein PF7</fullName>
    </alternativeName>
    <alternativeName>
        <fullName evidence="9">Merozoite surface antigen 2</fullName>
        <shortName evidence="9">MSA-2</shortName>
    </alternativeName>
</protein>
<name>MSA2_PLAFG</name>
<organism>
    <name type="scientific">Plasmodium falciparum (isolate FCR-3 / Gambia)</name>
    <dbReference type="NCBI Taxonomy" id="5838"/>
    <lineage>
        <taxon>Eukaryota</taxon>
        <taxon>Sar</taxon>
        <taxon>Alveolata</taxon>
        <taxon>Apicomplexa</taxon>
        <taxon>Aconoidasida</taxon>
        <taxon>Haemosporida</taxon>
        <taxon>Plasmodiidae</taxon>
        <taxon>Plasmodium</taxon>
        <taxon>Plasmodium (Laverania)</taxon>
    </lineage>
</organism>
<proteinExistence type="evidence at protein level"/>
<gene>
    <name evidence="2" type="primary">MSP2</name>
    <name evidence="9" type="synonym">MSA2</name>
</gene>
<sequence length="287" mass="28555">MKVIKTLSIINFFIFVTFNIKNESKYSNTFINNAYNMSIRRSMTESNPPTGASGSAGGSAGGSAGGSAGGSAGGSAGGSAGGSAGGSAGGSAGGSAGGSAGGSAGSGDGNGANPGADAERSPSTPATTTTTTTTNDAEASTSTSSENPNHNNAETNQANKETQNNSNVQQDSQTKSNVPPTQDADTKSPTAQPEQAENSAPTAEQTESPELQSAPENKGTGQHGHMHGSRNNHPQNTSDSQKECTDGNKENCGAATSLLNNSSNIASINKFVVLISATLVLSFAIFI</sequence>
<accession>P19260</accession>
<comment type="function">
    <text evidence="2">May play a role in the merozoite attachment to the erythrocyte.</text>
</comment>
<comment type="subcellular location">
    <subcellularLocation>
        <location evidence="5">Cell membrane</location>
        <topology evidence="5">Lipid-anchor</topology>
        <topology evidence="5">GPI-anchor</topology>
    </subcellularLocation>
    <text evidence="2">During host erythrocyte invasion by merozoites, carried into invaded erythrocytes where it is rapidly degraded.</text>
</comment>
<comment type="domain">
    <text evidence="2">The N-terminal region appears to be involved in lipid binding.</text>
</comment>
<comment type="polymorphism">
    <text evidence="7">The sequence varies across Plasmodium strains (PubMed:2090943). All variants share conserved N- and C-terminal regions; however, they belong to two allelic families, represented by 3D7 strain and FC27 strain sequences respectively, distinguished by tandem repeats and dimorphic flanking sequences within the central region of the protein (PubMed:2090943).</text>
</comment>
<dbReference type="EMBL" id="M28890">
    <property type="protein sequence ID" value="AAA29650.1"/>
    <property type="molecule type" value="Genomic_DNA"/>
</dbReference>
<dbReference type="EMBL" id="X53832">
    <property type="protein sequence ID" value="CAA37829.1"/>
    <property type="molecule type" value="Genomic_DNA"/>
</dbReference>
<dbReference type="EMBL" id="M60188">
    <property type="protein sequence ID" value="AAA29688.1"/>
    <property type="molecule type" value="Genomic_DNA"/>
</dbReference>
<dbReference type="PIR" id="B39615">
    <property type="entry name" value="B39615"/>
</dbReference>
<dbReference type="BMRB" id="P19260"/>
<dbReference type="GlyCosmos" id="P19260">
    <property type="glycosylation" value="6 sites, No reported glycans"/>
</dbReference>
<dbReference type="GO" id="GO:0005886">
    <property type="term" value="C:plasma membrane"/>
    <property type="evidence" value="ECO:0007669"/>
    <property type="project" value="UniProtKB-SubCell"/>
</dbReference>
<dbReference type="GO" id="GO:0098552">
    <property type="term" value="C:side of membrane"/>
    <property type="evidence" value="ECO:0007669"/>
    <property type="project" value="UniProtKB-KW"/>
</dbReference>
<dbReference type="GO" id="GO:0007155">
    <property type="term" value="P:cell adhesion"/>
    <property type="evidence" value="ECO:0007669"/>
    <property type="project" value="InterPro"/>
</dbReference>
<dbReference type="InterPro" id="IPR001136">
    <property type="entry name" value="MSA2"/>
</dbReference>
<dbReference type="Pfam" id="PF00985">
    <property type="entry name" value="MSA_2"/>
    <property type="match status" value="1"/>
</dbReference>
<dbReference type="PIRSF" id="PIRSF003575">
    <property type="entry name" value="MSA_2"/>
    <property type="match status" value="1"/>
</dbReference>
<feature type="signal peptide" evidence="3">
    <location>
        <begin position="1"/>
        <end position="20"/>
    </location>
</feature>
<feature type="chain" id="PRO_0000024594" description="Merozoite surface protein 2">
    <location>
        <begin position="21"/>
        <end position="261"/>
    </location>
</feature>
<feature type="propeptide" id="PRO_0000024595" description="Removed in mature form" evidence="5">
    <location>
        <begin position="262"/>
        <end position="287"/>
    </location>
</feature>
<feature type="repeat" description="1" evidence="6">
    <location>
        <begin position="55"/>
        <end position="58"/>
    </location>
</feature>
<feature type="repeat" description="2" evidence="6">
    <location>
        <begin position="59"/>
        <end position="62"/>
    </location>
</feature>
<feature type="repeat" description="3" evidence="6">
    <location>
        <begin position="63"/>
        <end position="66"/>
    </location>
</feature>
<feature type="repeat" description="4" evidence="6">
    <location>
        <begin position="67"/>
        <end position="70"/>
    </location>
</feature>
<feature type="repeat" description="5" evidence="6">
    <location>
        <begin position="71"/>
        <end position="74"/>
    </location>
</feature>
<feature type="repeat" description="6" evidence="6">
    <location>
        <begin position="75"/>
        <end position="78"/>
    </location>
</feature>
<feature type="repeat" description="7" evidence="6">
    <location>
        <begin position="79"/>
        <end position="82"/>
    </location>
</feature>
<feature type="repeat" description="8" evidence="6">
    <location>
        <begin position="83"/>
        <end position="86"/>
    </location>
</feature>
<feature type="repeat" description="9" evidence="6">
    <location>
        <begin position="87"/>
        <end position="90"/>
    </location>
</feature>
<feature type="repeat" description="10" evidence="6">
    <location>
        <begin position="91"/>
        <end position="94"/>
    </location>
</feature>
<feature type="repeat" description="11" evidence="6">
    <location>
        <begin position="95"/>
        <end position="98"/>
    </location>
</feature>
<feature type="repeat" description="12" evidence="6">
    <location>
        <begin position="99"/>
        <end position="102"/>
    </location>
</feature>
<feature type="region of interest" description="Disordered" evidence="4">
    <location>
        <begin position="42"/>
        <end position="248"/>
    </location>
</feature>
<feature type="region of interest" description="Polymorphic region" evidence="6 7">
    <location>
        <begin position="44"/>
        <end position="213"/>
    </location>
</feature>
<feature type="region of interest" description="12 X 4 AA tandem repeats of S-A-G-G" evidence="6">
    <location>
        <begin position="55"/>
        <end position="102"/>
    </location>
</feature>
<feature type="compositionally biased region" description="Gly residues" evidence="4">
    <location>
        <begin position="54"/>
        <end position="112"/>
    </location>
</feature>
<feature type="compositionally biased region" description="Low complexity" evidence="4">
    <location>
        <begin position="121"/>
        <end position="149"/>
    </location>
</feature>
<feature type="compositionally biased region" description="Polar residues" evidence="4">
    <location>
        <begin position="150"/>
        <end position="180"/>
    </location>
</feature>
<feature type="compositionally biased region" description="Polar residues" evidence="4">
    <location>
        <begin position="187"/>
        <end position="215"/>
    </location>
</feature>
<feature type="lipid moiety-binding region" description="GPI-anchor amidated asparagine" evidence="5">
    <location>
        <position position="261"/>
    </location>
</feature>
<feature type="glycosylation site" description="N-linked (GlcNAc...) asparagine" evidence="3">
    <location>
        <position position="22"/>
    </location>
</feature>
<feature type="glycosylation site" description="N-linked (GlcNAc...) asparagine" evidence="3">
    <location>
        <position position="36"/>
    </location>
</feature>
<feature type="glycosylation site" description="N-linked (GlcNAc...) asparagine" evidence="3">
    <location>
        <position position="164"/>
    </location>
</feature>
<feature type="glycosylation site" description="N-linked (GlcNAc...) asparagine" evidence="3">
    <location>
        <position position="236"/>
    </location>
</feature>
<feature type="glycosylation site" description="N-linked (GlcNAc...) asparagine" evidence="3">
    <location>
        <position position="260"/>
    </location>
</feature>
<feature type="glycosylation site" description="N-linked (GlcNAc...) asparagine" evidence="3">
    <location>
        <position position="261"/>
    </location>
</feature>
<feature type="disulfide bond" evidence="1">
    <location>
        <begin position="244"/>
        <end position="252"/>
    </location>
</feature>
<evidence type="ECO:0000250" key="1">
    <source>
        <dbReference type="UniProtKB" id="P19599"/>
    </source>
</evidence>
<evidence type="ECO:0000250" key="2">
    <source>
        <dbReference type="UniProtKB" id="P50498"/>
    </source>
</evidence>
<evidence type="ECO:0000255" key="3"/>
<evidence type="ECO:0000256" key="4">
    <source>
        <dbReference type="SAM" id="MobiDB-lite"/>
    </source>
</evidence>
<evidence type="ECO:0000269" key="5">
    <source>
    </source>
</evidence>
<evidence type="ECO:0000269" key="6">
    <source>
    </source>
</evidence>
<evidence type="ECO:0000269" key="7">
    <source>
    </source>
</evidence>
<evidence type="ECO:0000303" key="8">
    <source>
    </source>
</evidence>
<evidence type="ECO:0000303" key="9">
    <source>
    </source>
</evidence>
<keyword id="KW-1003">Cell membrane</keyword>
<keyword id="KW-1015">Disulfide bond</keyword>
<keyword id="KW-0325">Glycoprotein</keyword>
<keyword id="KW-0336">GPI-anchor</keyword>
<keyword id="KW-0449">Lipoprotein</keyword>
<keyword id="KW-0461">Malaria</keyword>
<keyword id="KW-0472">Membrane</keyword>
<keyword id="KW-0477">Merozoite</keyword>
<keyword id="KW-0677">Repeat</keyword>
<keyword id="KW-0732">Signal</keyword>
<reference key="1">
    <citation type="journal article" date="1990" name="Proc. Natl. Acad. Sci. U.S.A.">
        <title>Genes for Plasmodium falciparum surface antigens cloned by expression in COS cells.</title>
        <authorList>
            <person name="Elliott J.F."/>
            <person name="Albrecht G.R."/>
            <person name="Gilladoga A."/>
            <person name="Handunnetti S.M."/>
            <person name="Neequaye J."/>
            <person name="Lallinger G."/>
            <person name="Minjas J.N."/>
            <person name="Howard R.J."/>
        </authorList>
    </citation>
    <scope>NUCLEOTIDE SEQUENCE [GENOMIC DNA]</scope>
</reference>
<reference key="2">
    <citation type="journal article" date="1991" name="Mol. Cell. Biol.">
        <title>Structural and antigenic polymorphism of the 35- to 48-kilodalton merozoite surface antigen (MSA-2) of the malaria parasite Plasmodium falciparum.</title>
        <authorList>
            <person name="Fenton B."/>
            <person name="Clark J.T."/>
            <person name="Khan C.M.A."/>
            <person name="Robinson J.V."/>
            <person name="Walliker D."/>
            <person name="Ridley R."/>
            <person name="Scaife J.G."/>
            <person name="McBride J.S."/>
        </authorList>
    </citation>
    <scope>NUCLEOTIDE SEQUENCE [GENOMIC DNA]</scope>
    <scope>POLYMORPHISM</scope>
    <scope>REPEATS</scope>
</reference>
<reference key="3">
    <citation type="journal article" date="1990" name="Mol. Biochem. Parasitol.">
        <title>Sequence comparison of allelic forms of the Plasmodium falciparum merozoite surface antigen MSA2.</title>
        <authorList>
            <person name="Thomas A.W."/>
            <person name="Carr D.A."/>
            <person name="Carter J.M."/>
            <person name="Lyon J.A."/>
        </authorList>
    </citation>
    <scope>NUCLEOTIDE SEQUENCE [GENOMIC DNA]</scope>
    <scope>POLYMORPHISM</scope>
</reference>
<reference key="4">
    <citation type="journal article" date="2000" name="J. Exp. Med.">
        <title>Glycosylphosphatidylinositol anchors of Plasmodium falciparum: molecular characterization and naturally elicited antibody response that may provide immunity to malaria pathogenesis.</title>
        <authorList>
            <person name="Naik R.S."/>
            <person name="Branch O.H."/>
            <person name="Woods A.S."/>
            <person name="Vijaykumar M."/>
            <person name="Perkins D.J."/>
            <person name="Nahlen B.L."/>
            <person name="Lal A.A."/>
            <person name="Cotter R.J."/>
            <person name="Costello C.E."/>
            <person name="Ockenhouse C.F."/>
            <person name="Davidson E.A."/>
            <person name="Gowda D.C."/>
        </authorList>
    </citation>
    <scope>SUBCELLULAR LOCATION</scope>
    <scope>GPI-ANCHOR AT ASN-261</scope>
</reference>